<dbReference type="EC" id="3.1.3.16" evidence="2"/>
<dbReference type="EMBL" id="HE601289">
    <property type="protein sequence ID" value="CAP30806.3"/>
    <property type="molecule type" value="Genomic_DNA"/>
</dbReference>
<dbReference type="SMR" id="A8XE00"/>
<dbReference type="FunCoup" id="A8XE00">
    <property type="interactions" value="2550"/>
</dbReference>
<dbReference type="STRING" id="6238.A8XE00"/>
<dbReference type="EnsemblMetazoa" id="CBG11776.1">
    <property type="protein sequence ID" value="CBG11776.1"/>
    <property type="gene ID" value="WBGene00032850"/>
</dbReference>
<dbReference type="KEGG" id="cbr:CBG_11776"/>
<dbReference type="CTD" id="8583018"/>
<dbReference type="WormBase" id="CBG11776">
    <property type="protein sequence ID" value="CBP02888"/>
    <property type="gene ID" value="WBGene00032850"/>
    <property type="gene designation" value="Cbr-pph-4.1"/>
</dbReference>
<dbReference type="eggNOG" id="KOG0372">
    <property type="taxonomic scope" value="Eukaryota"/>
</dbReference>
<dbReference type="HOGENOM" id="CLU_004962_8_1_1"/>
<dbReference type="InParanoid" id="A8XE00"/>
<dbReference type="OMA" id="QSTMPID"/>
<dbReference type="OrthoDB" id="1930084at2759"/>
<dbReference type="Proteomes" id="UP000008549">
    <property type="component" value="Unassembled WGS sequence"/>
</dbReference>
<dbReference type="GO" id="GO:0005813">
    <property type="term" value="C:centrosome"/>
    <property type="evidence" value="ECO:0007669"/>
    <property type="project" value="UniProtKB-SubCell"/>
</dbReference>
<dbReference type="GO" id="GO:0005737">
    <property type="term" value="C:cytoplasm"/>
    <property type="evidence" value="ECO:0000318"/>
    <property type="project" value="GO_Central"/>
</dbReference>
<dbReference type="GO" id="GO:0005634">
    <property type="term" value="C:nucleus"/>
    <property type="evidence" value="ECO:0000318"/>
    <property type="project" value="GO_Central"/>
</dbReference>
<dbReference type="GO" id="GO:0046872">
    <property type="term" value="F:metal ion binding"/>
    <property type="evidence" value="ECO:0007669"/>
    <property type="project" value="UniProtKB-KW"/>
</dbReference>
<dbReference type="GO" id="GO:0004722">
    <property type="term" value="F:protein serine/threonine phosphatase activity"/>
    <property type="evidence" value="ECO:0000318"/>
    <property type="project" value="GO_Central"/>
</dbReference>
<dbReference type="GO" id="GO:0051301">
    <property type="term" value="P:cell division"/>
    <property type="evidence" value="ECO:0007669"/>
    <property type="project" value="UniProtKB-KW"/>
</dbReference>
<dbReference type="GO" id="GO:0051026">
    <property type="term" value="P:chiasma assembly"/>
    <property type="evidence" value="ECO:0007669"/>
    <property type="project" value="EnsemblMetazoa"/>
</dbReference>
<dbReference type="GO" id="GO:0000724">
    <property type="term" value="P:double-strand break repair via homologous recombination"/>
    <property type="evidence" value="ECO:0000318"/>
    <property type="project" value="GO_Central"/>
</dbReference>
<dbReference type="GO" id="GO:0009792">
    <property type="term" value="P:embryo development ending in birth or egg hatching"/>
    <property type="evidence" value="ECO:0007669"/>
    <property type="project" value="EnsemblMetazoa"/>
</dbReference>
<dbReference type="GO" id="GO:1905261">
    <property type="term" value="P:regulation of meiotic DNA double-strand break formation involved in reciprocal meiotic recombination"/>
    <property type="evidence" value="ECO:0007669"/>
    <property type="project" value="EnsemblMetazoa"/>
</dbReference>
<dbReference type="CDD" id="cd07415">
    <property type="entry name" value="MPP_PP2A_PP4_PP6"/>
    <property type="match status" value="1"/>
</dbReference>
<dbReference type="FunFam" id="3.60.21.10:FF:000010">
    <property type="entry name" value="Serine/threonine-protein phosphatase"/>
    <property type="match status" value="1"/>
</dbReference>
<dbReference type="Gene3D" id="3.60.21.10">
    <property type="match status" value="1"/>
</dbReference>
<dbReference type="InterPro" id="IPR004843">
    <property type="entry name" value="Calcineurin-like_PHP_ApaH"/>
</dbReference>
<dbReference type="InterPro" id="IPR029052">
    <property type="entry name" value="Metallo-depent_PP-like"/>
</dbReference>
<dbReference type="InterPro" id="IPR047129">
    <property type="entry name" value="PPA2-like"/>
</dbReference>
<dbReference type="InterPro" id="IPR006186">
    <property type="entry name" value="Ser/Thr-sp_prot-phosphatase"/>
</dbReference>
<dbReference type="PANTHER" id="PTHR45619">
    <property type="entry name" value="SERINE/THREONINE-PROTEIN PHOSPHATASE PP2A-RELATED"/>
    <property type="match status" value="1"/>
</dbReference>
<dbReference type="Pfam" id="PF00149">
    <property type="entry name" value="Metallophos"/>
    <property type="match status" value="1"/>
</dbReference>
<dbReference type="PRINTS" id="PR00114">
    <property type="entry name" value="STPHPHTASE"/>
</dbReference>
<dbReference type="SMART" id="SM00156">
    <property type="entry name" value="PP2Ac"/>
    <property type="match status" value="1"/>
</dbReference>
<dbReference type="SUPFAM" id="SSF56300">
    <property type="entry name" value="Metallo-dependent phosphatases"/>
    <property type="match status" value="1"/>
</dbReference>
<dbReference type="PROSITE" id="PS00125">
    <property type="entry name" value="SER_THR_PHOSPHATASE"/>
    <property type="match status" value="1"/>
</dbReference>
<feature type="chain" id="PRO_0000353209" description="Serine/threonine-protein phosphatase 4 catalytic subunit 1">
    <location>
        <begin position="1"/>
        <end position="333"/>
    </location>
</feature>
<feature type="region of interest" description="Disordered" evidence="5">
    <location>
        <begin position="1"/>
        <end position="29"/>
    </location>
</feature>
<feature type="compositionally biased region" description="Polar residues" evidence="5">
    <location>
        <begin position="7"/>
        <end position="27"/>
    </location>
</feature>
<feature type="active site" description="Proton donor" evidence="1">
    <location>
        <position position="140"/>
    </location>
</feature>
<feature type="binding site" evidence="3">
    <location>
        <position position="79"/>
    </location>
    <ligand>
        <name>Mn(2+)</name>
        <dbReference type="ChEBI" id="CHEBI:29035"/>
        <label>1</label>
    </ligand>
</feature>
<feature type="binding site" evidence="3">
    <location>
        <position position="81"/>
    </location>
    <ligand>
        <name>Mn(2+)</name>
        <dbReference type="ChEBI" id="CHEBI:29035"/>
        <label>1</label>
    </ligand>
</feature>
<feature type="binding site" evidence="3">
    <location>
        <position position="107"/>
    </location>
    <ligand>
        <name>Mn(2+)</name>
        <dbReference type="ChEBI" id="CHEBI:29035"/>
        <label>1</label>
    </ligand>
</feature>
<feature type="binding site" evidence="3">
    <location>
        <position position="107"/>
    </location>
    <ligand>
        <name>Mn(2+)</name>
        <dbReference type="ChEBI" id="CHEBI:29035"/>
        <label>2</label>
    </ligand>
</feature>
<feature type="binding site" evidence="3">
    <location>
        <position position="139"/>
    </location>
    <ligand>
        <name>Mn(2+)</name>
        <dbReference type="ChEBI" id="CHEBI:29035"/>
        <label>2</label>
    </ligand>
</feature>
<feature type="binding site" evidence="3">
    <location>
        <position position="189"/>
    </location>
    <ligand>
        <name>Mn(2+)</name>
        <dbReference type="ChEBI" id="CHEBI:29035"/>
        <label>2</label>
    </ligand>
</feature>
<feature type="binding site" evidence="3">
    <location>
        <position position="264"/>
    </location>
    <ligand>
        <name>Mn(2+)</name>
        <dbReference type="ChEBI" id="CHEBI:29035"/>
        <label>2</label>
    </ligand>
</feature>
<feature type="modified residue" description="Leucine methyl ester" evidence="3">
    <location>
        <position position="333"/>
    </location>
</feature>
<sequence>MALAVADTQNETFARSESPTSGPSDQLSTHDLDRHIEKLMRCELIAEQDVKTLCAKAREILAEEGNVQVIDSPVTICGDIHGQFYDLMELFRVGGPVPNTNYLFLGDFVDRGFYSVETFLLLLALKARYPDRMMLIRGNHESRQITQVYGFYDECMRKYGNASVWKHCTEVFDYLALAAVIDGKVFCVHGGLSPSISTMDQIRVIDRKQEVPHDGPMCDLLWSDPEEGNVGWGLSPRGAGYLFGADASKTFCEANSVDLICRAHQLVMEGYKWHFNEKVLTVWSAPNYCYRCGNVAAILELDENLNREFTIFEAAPQENRGAPAKKPHADYFL</sequence>
<organism>
    <name type="scientific">Caenorhabditis briggsae</name>
    <dbReference type="NCBI Taxonomy" id="6238"/>
    <lineage>
        <taxon>Eukaryota</taxon>
        <taxon>Metazoa</taxon>
        <taxon>Ecdysozoa</taxon>
        <taxon>Nematoda</taxon>
        <taxon>Chromadorea</taxon>
        <taxon>Rhabditida</taxon>
        <taxon>Rhabditina</taxon>
        <taxon>Rhabditomorpha</taxon>
        <taxon>Rhabditoidea</taxon>
        <taxon>Rhabditidae</taxon>
        <taxon>Peloderinae</taxon>
        <taxon>Caenorhabditis</taxon>
    </lineage>
</organism>
<protein>
    <recommendedName>
        <fullName>Serine/threonine-protein phosphatase 4 catalytic subunit 1</fullName>
        <shortName>PP4C-1</shortName>
        <ecNumber evidence="2">3.1.3.16</ecNumber>
    </recommendedName>
</protein>
<comment type="function">
    <text evidence="4">Protein phosphatase which plays an essential role in meiosis and in early embryonic mitosis. During spermatocyte meiosis and the first embryonic mitosis, regulates centrosome maturation, and thus spindle formation, by recruiting some of the components of the pericentriolar material (PCM). During oocyte meiosis I, regulates meiotic chromosome dynamics including synapsis-independent chromosome pairing, restriction of synapsis to homologous chromosomes, programmed DNA double-strand break initiation and crossover formation resulting in chiasma formation. During oocyte meiosis II and probably together with regulatory subunit ppfr-1, may regulate microtubule severing by dephosphorylating and activating mei-1, a component of the katanin microtubule severing complex.</text>
</comment>
<comment type="catalytic activity">
    <reaction evidence="2">
        <text>O-phospho-L-seryl-[protein] + H2O = L-seryl-[protein] + phosphate</text>
        <dbReference type="Rhea" id="RHEA:20629"/>
        <dbReference type="Rhea" id="RHEA-COMP:9863"/>
        <dbReference type="Rhea" id="RHEA-COMP:11604"/>
        <dbReference type="ChEBI" id="CHEBI:15377"/>
        <dbReference type="ChEBI" id="CHEBI:29999"/>
        <dbReference type="ChEBI" id="CHEBI:43474"/>
        <dbReference type="ChEBI" id="CHEBI:83421"/>
        <dbReference type="EC" id="3.1.3.16"/>
    </reaction>
</comment>
<comment type="catalytic activity">
    <reaction evidence="2">
        <text>O-phospho-L-threonyl-[protein] + H2O = L-threonyl-[protein] + phosphate</text>
        <dbReference type="Rhea" id="RHEA:47004"/>
        <dbReference type="Rhea" id="RHEA-COMP:11060"/>
        <dbReference type="Rhea" id="RHEA-COMP:11605"/>
        <dbReference type="ChEBI" id="CHEBI:15377"/>
        <dbReference type="ChEBI" id="CHEBI:30013"/>
        <dbReference type="ChEBI" id="CHEBI:43474"/>
        <dbReference type="ChEBI" id="CHEBI:61977"/>
        <dbReference type="EC" id="3.1.3.16"/>
    </reaction>
</comment>
<comment type="cofactor">
    <cofactor evidence="3">
        <name>Mn(2+)</name>
        <dbReference type="ChEBI" id="CHEBI:29035"/>
    </cofactor>
    <text evidence="3">Binds 2 manganese ions per subunit.</text>
</comment>
<comment type="subunit">
    <text evidence="2 4">Serine/threonine-protein phosphatase 4 (PP4) occurs in different assemblies of the catalytic and one or more regulatory subunits. The regulatory subunits are likely to be ppfr-1, ppfr-2, ppfr-4 and smk-1. Interacts with mei-1.</text>
</comment>
<comment type="subcellular location">
    <subcellularLocation>
        <location evidence="4">Cytoplasm</location>
    </subcellularLocation>
    <subcellularLocation>
        <location evidence="4">Cytoplasm</location>
        <location evidence="4">Cytoskeleton</location>
        <location evidence="4">Microtubule organizing center</location>
        <location evidence="4">Centrosome</location>
    </subcellularLocation>
    <text evidence="4">Localizes at centrosomes from prophase to telophase but not during interphase. Also localizes to the cytoplasm throughout the cell cycle.</text>
</comment>
<comment type="PTM">
    <text evidence="2">Methylation at the C-terminal Leu-333 is critical for interactions with regulatory subunits.</text>
</comment>
<comment type="similarity">
    <text evidence="6">Belongs to the PPP phosphatase family. PP-4 (PP-X) subfamily.</text>
</comment>
<proteinExistence type="inferred from homology"/>
<name>PP4C1_CAEBR</name>
<gene>
    <name type="primary">pph-4.1</name>
    <name type="ORF">CBG11776</name>
</gene>
<keyword id="KW-0131">Cell cycle</keyword>
<keyword id="KW-0132">Cell division</keyword>
<keyword id="KW-0963">Cytoplasm</keyword>
<keyword id="KW-0206">Cytoskeleton</keyword>
<keyword id="KW-0378">Hydrolase</keyword>
<keyword id="KW-0464">Manganese</keyword>
<keyword id="KW-0469">Meiosis</keyword>
<keyword id="KW-0479">Metal-binding</keyword>
<keyword id="KW-0488">Methylation</keyword>
<keyword id="KW-0498">Mitosis</keyword>
<keyword id="KW-0904">Protein phosphatase</keyword>
<keyword id="KW-1185">Reference proteome</keyword>
<reference key="1">
    <citation type="journal article" date="2003" name="PLoS Biol.">
        <title>The genome sequence of Caenorhabditis briggsae: a platform for comparative genomics.</title>
        <authorList>
            <person name="Stein L.D."/>
            <person name="Bao Z."/>
            <person name="Blasiar D."/>
            <person name="Blumenthal T."/>
            <person name="Brent M.R."/>
            <person name="Chen N."/>
            <person name="Chinwalla A."/>
            <person name="Clarke L."/>
            <person name="Clee C."/>
            <person name="Coghlan A."/>
            <person name="Coulson A."/>
            <person name="D'Eustachio P."/>
            <person name="Fitch D.H.A."/>
            <person name="Fulton L.A."/>
            <person name="Fulton R.E."/>
            <person name="Griffiths-Jones S."/>
            <person name="Harris T.W."/>
            <person name="Hillier L.W."/>
            <person name="Kamath R."/>
            <person name="Kuwabara P.E."/>
            <person name="Mardis E.R."/>
            <person name="Marra M.A."/>
            <person name="Miner T.L."/>
            <person name="Minx P."/>
            <person name="Mullikin J.C."/>
            <person name="Plumb R.W."/>
            <person name="Rogers J."/>
            <person name="Schein J.E."/>
            <person name="Sohrmann M."/>
            <person name="Spieth J."/>
            <person name="Stajich J.E."/>
            <person name="Wei C."/>
            <person name="Willey D."/>
            <person name="Wilson R.K."/>
            <person name="Durbin R.M."/>
            <person name="Waterston R.H."/>
        </authorList>
    </citation>
    <scope>NUCLEOTIDE SEQUENCE [LARGE SCALE GENOMIC DNA]</scope>
    <source>
        <strain>AF16</strain>
    </source>
</reference>
<evidence type="ECO:0000250" key="1">
    <source>
        <dbReference type="UniProtKB" id="P36873"/>
    </source>
</evidence>
<evidence type="ECO:0000250" key="2">
    <source>
        <dbReference type="UniProtKB" id="P60510"/>
    </source>
</evidence>
<evidence type="ECO:0000250" key="3">
    <source>
        <dbReference type="UniProtKB" id="P67775"/>
    </source>
</evidence>
<evidence type="ECO:0000250" key="4">
    <source>
        <dbReference type="UniProtKB" id="Q9XW79"/>
    </source>
</evidence>
<evidence type="ECO:0000256" key="5">
    <source>
        <dbReference type="SAM" id="MobiDB-lite"/>
    </source>
</evidence>
<evidence type="ECO:0000305" key="6"/>
<accession>A8XE00</accession>